<keyword id="KW-0131">Cell cycle</keyword>
<keyword id="KW-0132">Cell division</keyword>
<keyword id="KW-0717">Septation</keyword>
<name>MINC_YERPA</name>
<organism>
    <name type="scientific">Yersinia pestis bv. Antiqua (strain Antiqua)</name>
    <dbReference type="NCBI Taxonomy" id="360102"/>
    <lineage>
        <taxon>Bacteria</taxon>
        <taxon>Pseudomonadati</taxon>
        <taxon>Pseudomonadota</taxon>
        <taxon>Gammaproteobacteria</taxon>
        <taxon>Enterobacterales</taxon>
        <taxon>Yersiniaceae</taxon>
        <taxon>Yersinia</taxon>
    </lineage>
</organism>
<proteinExistence type="inferred from homology"/>
<evidence type="ECO:0000255" key="1">
    <source>
        <dbReference type="HAMAP-Rule" id="MF_00267"/>
    </source>
</evidence>
<protein>
    <recommendedName>
        <fullName evidence="1">Probable septum site-determining protein MinC</fullName>
    </recommendedName>
</protein>
<accession>Q1C7Z4</accession>
<feature type="chain" id="PRO_1000047878" description="Probable septum site-determining protein MinC">
    <location>
        <begin position="1"/>
        <end position="228"/>
    </location>
</feature>
<reference key="1">
    <citation type="journal article" date="2006" name="J. Bacteriol.">
        <title>Complete genome sequence of Yersinia pestis strains Antiqua and Nepal516: evidence of gene reduction in an emerging pathogen.</title>
        <authorList>
            <person name="Chain P.S.G."/>
            <person name="Hu P."/>
            <person name="Malfatti S.A."/>
            <person name="Radnedge L."/>
            <person name="Larimer F."/>
            <person name="Vergez L.M."/>
            <person name="Worsham P."/>
            <person name="Chu M.C."/>
            <person name="Andersen G.L."/>
        </authorList>
    </citation>
    <scope>NUCLEOTIDE SEQUENCE [LARGE SCALE GENOMIC DNA]</scope>
    <source>
        <strain>Antiqua</strain>
    </source>
</reference>
<sequence>MSQSPIELKGSSFTLSVVHLHDSRPEVIRQALQEKVDQAPAFLKNAPVVINVATLPNGANWKDLQQAVTSAGLRIVGISGCQDERQKRAIARAGLPLLSEGKGQKLAPEPVISPPENVPTQTRIINTPVRSGQQIYARNCDLIVISSVSAGAELIADGNIHIYGMMRGRALAGASGDAKCQIFCTHLGAELVSIAGQYWLSDQIPLEYFGQAARLYLQDNTLTIQPLN</sequence>
<comment type="function">
    <text evidence="1">Cell division inhibitor that blocks the formation of polar Z ring septums. Rapidly oscillates between the poles of the cell to destabilize FtsZ filaments that have formed before they mature into polar Z rings. Prevents FtsZ polymerization.</text>
</comment>
<comment type="subunit">
    <text evidence="1">Interacts with MinD and FtsZ.</text>
</comment>
<comment type="similarity">
    <text evidence="1">Belongs to the MinC family.</text>
</comment>
<gene>
    <name evidence="1" type="primary">minC</name>
    <name type="ordered locus">YPA_1461</name>
</gene>
<dbReference type="EMBL" id="CP000308">
    <property type="protein sequence ID" value="ABG13428.1"/>
    <property type="molecule type" value="Genomic_DNA"/>
</dbReference>
<dbReference type="RefSeq" id="WP_002220631.1">
    <property type="nucleotide sequence ID" value="NZ_CP009906.1"/>
</dbReference>
<dbReference type="SMR" id="Q1C7Z4"/>
<dbReference type="GeneID" id="96665552"/>
<dbReference type="KEGG" id="ypa:YPA_1461"/>
<dbReference type="Proteomes" id="UP000001971">
    <property type="component" value="Chromosome"/>
</dbReference>
<dbReference type="GO" id="GO:0000902">
    <property type="term" value="P:cell morphogenesis"/>
    <property type="evidence" value="ECO:0007669"/>
    <property type="project" value="InterPro"/>
</dbReference>
<dbReference type="GO" id="GO:0000917">
    <property type="term" value="P:division septum assembly"/>
    <property type="evidence" value="ECO:0007669"/>
    <property type="project" value="UniProtKB-KW"/>
</dbReference>
<dbReference type="GO" id="GO:0051302">
    <property type="term" value="P:regulation of cell division"/>
    <property type="evidence" value="ECO:0007669"/>
    <property type="project" value="InterPro"/>
</dbReference>
<dbReference type="GO" id="GO:1901891">
    <property type="term" value="P:regulation of cell septum assembly"/>
    <property type="evidence" value="ECO:0007669"/>
    <property type="project" value="InterPro"/>
</dbReference>
<dbReference type="FunFam" id="2.160.20.70:FF:000002">
    <property type="entry name" value="Probable septum site-determining protein MinC"/>
    <property type="match status" value="1"/>
</dbReference>
<dbReference type="Gene3D" id="2.160.20.70">
    <property type="match status" value="1"/>
</dbReference>
<dbReference type="Gene3D" id="3.30.70.260">
    <property type="match status" value="1"/>
</dbReference>
<dbReference type="HAMAP" id="MF_00267">
    <property type="entry name" value="MinC"/>
    <property type="match status" value="1"/>
</dbReference>
<dbReference type="InterPro" id="IPR016098">
    <property type="entry name" value="CAP/MinC_C"/>
</dbReference>
<dbReference type="InterPro" id="IPR013033">
    <property type="entry name" value="MinC"/>
</dbReference>
<dbReference type="InterPro" id="IPR036145">
    <property type="entry name" value="MinC_C_sf"/>
</dbReference>
<dbReference type="InterPro" id="IPR007874">
    <property type="entry name" value="MinC_N"/>
</dbReference>
<dbReference type="InterPro" id="IPR005526">
    <property type="entry name" value="Septum_form_inhib_MinC_C"/>
</dbReference>
<dbReference type="NCBIfam" id="TIGR01222">
    <property type="entry name" value="minC"/>
    <property type="match status" value="1"/>
</dbReference>
<dbReference type="PANTHER" id="PTHR34108">
    <property type="entry name" value="SEPTUM SITE-DETERMINING PROTEIN MINC"/>
    <property type="match status" value="1"/>
</dbReference>
<dbReference type="PANTHER" id="PTHR34108:SF1">
    <property type="entry name" value="SEPTUM SITE-DETERMINING PROTEIN MINC"/>
    <property type="match status" value="1"/>
</dbReference>
<dbReference type="Pfam" id="PF03775">
    <property type="entry name" value="MinC_C"/>
    <property type="match status" value="1"/>
</dbReference>
<dbReference type="Pfam" id="PF05209">
    <property type="entry name" value="MinC_N"/>
    <property type="match status" value="1"/>
</dbReference>
<dbReference type="SUPFAM" id="SSF63848">
    <property type="entry name" value="Cell-division inhibitor MinC, C-terminal domain"/>
    <property type="match status" value="1"/>
</dbReference>